<evidence type="ECO:0000255" key="1">
    <source>
        <dbReference type="HAMAP-Rule" id="MF_01343"/>
    </source>
</evidence>
<evidence type="ECO:0000305" key="2"/>
<protein>
    <recommendedName>
        <fullName evidence="1">Small ribosomal subunit protein uS15</fullName>
    </recommendedName>
    <alternativeName>
        <fullName evidence="2">30S ribosomal protein S15</fullName>
    </alternativeName>
</protein>
<keyword id="KW-0687">Ribonucleoprotein</keyword>
<keyword id="KW-0689">Ribosomal protein</keyword>
<keyword id="KW-0694">RNA-binding</keyword>
<keyword id="KW-0699">rRNA-binding</keyword>
<name>RS15_ONYPE</name>
<comment type="function">
    <text evidence="1">One of the primary rRNA binding proteins, it binds directly to 16S rRNA where it helps nucleate assembly of the platform of the 30S subunit by binding and bridging several RNA helices of the 16S rRNA.</text>
</comment>
<comment type="function">
    <text evidence="1">Forms an intersubunit bridge (bridge B4) with the 23S rRNA of the 50S subunit in the ribosome.</text>
</comment>
<comment type="subunit">
    <text evidence="1">Part of the 30S ribosomal subunit. Forms a bridge to the 50S subunit in the 70S ribosome, contacting the 23S rRNA.</text>
</comment>
<comment type="similarity">
    <text evidence="1">Belongs to the universal ribosomal protein uS15 family.</text>
</comment>
<proteinExistence type="inferred from homology"/>
<dbReference type="EMBL" id="AP006628">
    <property type="protein sequence ID" value="BAD04221.1"/>
    <property type="molecule type" value="Genomic_DNA"/>
</dbReference>
<dbReference type="SMR" id="Q6YR80"/>
<dbReference type="STRING" id="262768.PAM_136"/>
<dbReference type="KEGG" id="poy:PAM_136"/>
<dbReference type="eggNOG" id="COG0184">
    <property type="taxonomic scope" value="Bacteria"/>
</dbReference>
<dbReference type="HOGENOM" id="CLU_148518_2_0_14"/>
<dbReference type="BioCyc" id="OYEL262768:G1G26-168-MONOMER"/>
<dbReference type="Proteomes" id="UP000002523">
    <property type="component" value="Chromosome"/>
</dbReference>
<dbReference type="GO" id="GO:0022627">
    <property type="term" value="C:cytosolic small ribosomal subunit"/>
    <property type="evidence" value="ECO:0007669"/>
    <property type="project" value="TreeGrafter"/>
</dbReference>
<dbReference type="GO" id="GO:0019843">
    <property type="term" value="F:rRNA binding"/>
    <property type="evidence" value="ECO:0007669"/>
    <property type="project" value="UniProtKB-UniRule"/>
</dbReference>
<dbReference type="GO" id="GO:0003735">
    <property type="term" value="F:structural constituent of ribosome"/>
    <property type="evidence" value="ECO:0007669"/>
    <property type="project" value="InterPro"/>
</dbReference>
<dbReference type="GO" id="GO:0006412">
    <property type="term" value="P:translation"/>
    <property type="evidence" value="ECO:0007669"/>
    <property type="project" value="UniProtKB-UniRule"/>
</dbReference>
<dbReference type="CDD" id="cd00353">
    <property type="entry name" value="Ribosomal_S15p_S13e"/>
    <property type="match status" value="1"/>
</dbReference>
<dbReference type="FunFam" id="1.10.287.10:FF:000002">
    <property type="entry name" value="30S ribosomal protein S15"/>
    <property type="match status" value="1"/>
</dbReference>
<dbReference type="Gene3D" id="1.10.287.10">
    <property type="entry name" value="S15/NS1, RNA-binding"/>
    <property type="match status" value="1"/>
</dbReference>
<dbReference type="HAMAP" id="MF_01343_B">
    <property type="entry name" value="Ribosomal_uS15_B"/>
    <property type="match status" value="1"/>
</dbReference>
<dbReference type="InterPro" id="IPR000589">
    <property type="entry name" value="Ribosomal_uS15"/>
</dbReference>
<dbReference type="InterPro" id="IPR005290">
    <property type="entry name" value="Ribosomal_uS15_bac-type"/>
</dbReference>
<dbReference type="InterPro" id="IPR009068">
    <property type="entry name" value="uS15_NS1_RNA-bd_sf"/>
</dbReference>
<dbReference type="NCBIfam" id="TIGR00952">
    <property type="entry name" value="S15_bact"/>
    <property type="match status" value="1"/>
</dbReference>
<dbReference type="PANTHER" id="PTHR23321">
    <property type="entry name" value="RIBOSOMAL PROTEIN S15, BACTERIAL AND ORGANELLAR"/>
    <property type="match status" value="1"/>
</dbReference>
<dbReference type="PANTHER" id="PTHR23321:SF26">
    <property type="entry name" value="SMALL RIBOSOMAL SUBUNIT PROTEIN US15M"/>
    <property type="match status" value="1"/>
</dbReference>
<dbReference type="Pfam" id="PF00312">
    <property type="entry name" value="Ribosomal_S15"/>
    <property type="match status" value="1"/>
</dbReference>
<dbReference type="SMART" id="SM01387">
    <property type="entry name" value="Ribosomal_S15"/>
    <property type="match status" value="1"/>
</dbReference>
<dbReference type="SUPFAM" id="SSF47060">
    <property type="entry name" value="S15/NS1 RNA-binding domain"/>
    <property type="match status" value="1"/>
</dbReference>
<dbReference type="PROSITE" id="PS00362">
    <property type="entry name" value="RIBOSOMAL_S15"/>
    <property type="match status" value="1"/>
</dbReference>
<feature type="chain" id="PRO_0000115495" description="Small ribosomal subunit protein uS15">
    <location>
        <begin position="1"/>
        <end position="74"/>
    </location>
</feature>
<organism>
    <name type="scientific">Onion yellows phytoplasma (strain OY-M)</name>
    <dbReference type="NCBI Taxonomy" id="262768"/>
    <lineage>
        <taxon>Bacteria</taxon>
        <taxon>Bacillati</taxon>
        <taxon>Mycoplasmatota</taxon>
        <taxon>Mollicutes</taxon>
        <taxon>Acholeplasmatales</taxon>
        <taxon>Acholeplasmataceae</taxon>
        <taxon>Candidatus Phytoplasma</taxon>
        <taxon>16SrI (Aster yellows group)</taxon>
    </lineage>
</organism>
<gene>
    <name evidence="1" type="primary">rpsO</name>
    <name type="ordered locus">PAM_136</name>
</gene>
<reference key="1">
    <citation type="journal article" date="2004" name="Nat. Genet.">
        <title>Reductive evolution suggested from the complete genome sequence of a plant-pathogenic phytoplasma.</title>
        <authorList>
            <person name="Oshima K."/>
            <person name="Kakizawa S."/>
            <person name="Nishigawa H."/>
            <person name="Jung H.-Y."/>
            <person name="Wei W."/>
            <person name="Suzuki S."/>
            <person name="Arashida R."/>
            <person name="Nakata D."/>
            <person name="Miyata S."/>
            <person name="Ugaki M."/>
            <person name="Namba S."/>
        </authorList>
    </citation>
    <scope>NUCLEOTIDE SEQUENCE [LARGE SCALE GENOMIC DNA]</scope>
    <source>
        <strain>OY-M</strain>
    </source>
</reference>
<accession>Q6YR80</accession>
<sequence>MALTKEQKQEIIKQNSRFAKDTGSSEVQIAILSAEIKQLSEHLKQHPHDFHSKRGLFMKNSKRRDLVKYLANQN</sequence>